<organism>
    <name type="scientific">Streptococcus gordonii (strain Challis / ATCC 35105 / BCRC 15272 / CH1 / DL1 / V288)</name>
    <dbReference type="NCBI Taxonomy" id="467705"/>
    <lineage>
        <taxon>Bacteria</taxon>
        <taxon>Bacillati</taxon>
        <taxon>Bacillota</taxon>
        <taxon>Bacilli</taxon>
        <taxon>Lactobacillales</taxon>
        <taxon>Streptococcaceae</taxon>
        <taxon>Streptococcus</taxon>
    </lineage>
</organism>
<accession>A8AVA7</accession>
<feature type="chain" id="PRO_1000085129" description="Protein GrpE">
    <location>
        <begin position="1"/>
        <end position="177"/>
    </location>
</feature>
<feature type="region of interest" description="Disordered" evidence="2">
    <location>
        <begin position="1"/>
        <end position="41"/>
    </location>
</feature>
<feature type="compositionally biased region" description="Basic and acidic residues" evidence="2">
    <location>
        <begin position="1"/>
        <end position="19"/>
    </location>
</feature>
<feature type="compositionally biased region" description="Basic and acidic residues" evidence="2">
    <location>
        <begin position="29"/>
        <end position="41"/>
    </location>
</feature>
<name>GRPE_STRGC</name>
<reference key="1">
    <citation type="journal article" date="2007" name="J. Bacteriol.">
        <title>Genome-wide transcriptional changes in Streptococcus gordonii in response to competence signaling peptide.</title>
        <authorList>
            <person name="Vickerman M.M."/>
            <person name="Iobst S."/>
            <person name="Jesionowski A.M."/>
            <person name="Gill S.R."/>
        </authorList>
    </citation>
    <scope>NUCLEOTIDE SEQUENCE [LARGE SCALE GENOMIC DNA]</scope>
    <source>
        <strain>Challis / ATCC 35105 / BCRC 15272 / CH1 / DL1 / V288</strain>
    </source>
</reference>
<protein>
    <recommendedName>
        <fullName evidence="1">Protein GrpE</fullName>
    </recommendedName>
    <alternativeName>
        <fullName evidence="1">HSP-70 cofactor</fullName>
    </alternativeName>
</protein>
<keyword id="KW-0143">Chaperone</keyword>
<keyword id="KW-0963">Cytoplasm</keyword>
<keyword id="KW-1185">Reference proteome</keyword>
<keyword id="KW-0346">Stress response</keyword>
<proteinExistence type="inferred from homology"/>
<sequence>MAKHKHEEHPEDVEVKETVETAEQAESASPEKSELELANERADDFENKYLRAHAEMQNIQRRANEERQLLQRYRSQDLAKAILPSLDNLERALAVEGLTDDVKKGLEMVQESLVHALKEEGIEEIPADGEFDHNYHMAIQTVPADDEHPADTIAQVFQKGYKLHDRILRPAMVVVYN</sequence>
<evidence type="ECO:0000255" key="1">
    <source>
        <dbReference type="HAMAP-Rule" id="MF_01151"/>
    </source>
</evidence>
<evidence type="ECO:0000256" key="2">
    <source>
        <dbReference type="SAM" id="MobiDB-lite"/>
    </source>
</evidence>
<gene>
    <name evidence="1" type="primary">grpE</name>
    <name type="ordered locus">SGO_0401</name>
</gene>
<comment type="function">
    <text evidence="1">Participates actively in the response to hyperosmotic and heat shock by preventing the aggregation of stress-denatured proteins, in association with DnaK and GrpE. It is the nucleotide exchange factor for DnaK and may function as a thermosensor. Unfolded proteins bind initially to DnaJ; upon interaction with the DnaJ-bound protein, DnaK hydrolyzes its bound ATP, resulting in the formation of a stable complex. GrpE releases ADP from DnaK; ATP binding to DnaK triggers the release of the substrate protein, thus completing the reaction cycle. Several rounds of ATP-dependent interactions between DnaJ, DnaK and GrpE are required for fully efficient folding.</text>
</comment>
<comment type="subunit">
    <text evidence="1">Homodimer.</text>
</comment>
<comment type="subcellular location">
    <subcellularLocation>
        <location evidence="1">Cytoplasm</location>
    </subcellularLocation>
</comment>
<comment type="similarity">
    <text evidence="1">Belongs to the GrpE family.</text>
</comment>
<dbReference type="EMBL" id="CP000725">
    <property type="protein sequence ID" value="ABV10272.1"/>
    <property type="molecule type" value="Genomic_DNA"/>
</dbReference>
<dbReference type="RefSeq" id="WP_011999913.1">
    <property type="nucleotide sequence ID" value="NC_009785.1"/>
</dbReference>
<dbReference type="SMR" id="A8AVA7"/>
<dbReference type="STRING" id="467705.SGO_0401"/>
<dbReference type="KEGG" id="sgo:SGO_0401"/>
<dbReference type="eggNOG" id="COG0576">
    <property type="taxonomic scope" value="Bacteria"/>
</dbReference>
<dbReference type="HOGENOM" id="CLU_057217_6_3_9"/>
<dbReference type="Proteomes" id="UP000001131">
    <property type="component" value="Chromosome"/>
</dbReference>
<dbReference type="GO" id="GO:0005737">
    <property type="term" value="C:cytoplasm"/>
    <property type="evidence" value="ECO:0007669"/>
    <property type="project" value="UniProtKB-SubCell"/>
</dbReference>
<dbReference type="GO" id="GO:0000774">
    <property type="term" value="F:adenyl-nucleotide exchange factor activity"/>
    <property type="evidence" value="ECO:0007669"/>
    <property type="project" value="InterPro"/>
</dbReference>
<dbReference type="GO" id="GO:0042803">
    <property type="term" value="F:protein homodimerization activity"/>
    <property type="evidence" value="ECO:0007669"/>
    <property type="project" value="InterPro"/>
</dbReference>
<dbReference type="GO" id="GO:0051087">
    <property type="term" value="F:protein-folding chaperone binding"/>
    <property type="evidence" value="ECO:0007669"/>
    <property type="project" value="InterPro"/>
</dbReference>
<dbReference type="GO" id="GO:0051082">
    <property type="term" value="F:unfolded protein binding"/>
    <property type="evidence" value="ECO:0007669"/>
    <property type="project" value="TreeGrafter"/>
</dbReference>
<dbReference type="GO" id="GO:0006457">
    <property type="term" value="P:protein folding"/>
    <property type="evidence" value="ECO:0007669"/>
    <property type="project" value="InterPro"/>
</dbReference>
<dbReference type="CDD" id="cd00446">
    <property type="entry name" value="GrpE"/>
    <property type="match status" value="1"/>
</dbReference>
<dbReference type="FunFam" id="2.30.22.10:FF:000004">
    <property type="entry name" value="Protein GrpE"/>
    <property type="match status" value="1"/>
</dbReference>
<dbReference type="Gene3D" id="3.90.20.20">
    <property type="match status" value="1"/>
</dbReference>
<dbReference type="Gene3D" id="2.30.22.10">
    <property type="entry name" value="Head domain of nucleotide exchange factor GrpE"/>
    <property type="match status" value="1"/>
</dbReference>
<dbReference type="HAMAP" id="MF_01151">
    <property type="entry name" value="GrpE"/>
    <property type="match status" value="1"/>
</dbReference>
<dbReference type="InterPro" id="IPR000740">
    <property type="entry name" value="GrpE"/>
</dbReference>
<dbReference type="InterPro" id="IPR013805">
    <property type="entry name" value="GrpE_coiled_coil"/>
</dbReference>
<dbReference type="InterPro" id="IPR009012">
    <property type="entry name" value="GrpE_head"/>
</dbReference>
<dbReference type="NCBIfam" id="NF010738">
    <property type="entry name" value="PRK14140.1"/>
    <property type="match status" value="1"/>
</dbReference>
<dbReference type="NCBIfam" id="NF010753">
    <property type="entry name" value="PRK14156.1"/>
    <property type="match status" value="1"/>
</dbReference>
<dbReference type="NCBIfam" id="NF010759">
    <property type="entry name" value="PRK14162.1"/>
    <property type="match status" value="1"/>
</dbReference>
<dbReference type="PANTHER" id="PTHR21237">
    <property type="entry name" value="GRPE PROTEIN"/>
    <property type="match status" value="1"/>
</dbReference>
<dbReference type="PANTHER" id="PTHR21237:SF23">
    <property type="entry name" value="GRPE PROTEIN HOMOLOG, MITOCHONDRIAL"/>
    <property type="match status" value="1"/>
</dbReference>
<dbReference type="Pfam" id="PF01025">
    <property type="entry name" value="GrpE"/>
    <property type="match status" value="1"/>
</dbReference>
<dbReference type="PRINTS" id="PR00773">
    <property type="entry name" value="GRPEPROTEIN"/>
</dbReference>
<dbReference type="SUPFAM" id="SSF58014">
    <property type="entry name" value="Coiled-coil domain of nucleotide exchange factor GrpE"/>
    <property type="match status" value="1"/>
</dbReference>
<dbReference type="SUPFAM" id="SSF51064">
    <property type="entry name" value="Head domain of nucleotide exchange factor GrpE"/>
    <property type="match status" value="1"/>
</dbReference>
<dbReference type="PROSITE" id="PS01071">
    <property type="entry name" value="GRPE"/>
    <property type="match status" value="1"/>
</dbReference>